<feature type="chain" id="PRO_0000226717" description="NADH-ubiquinone oxidoreductase chain 2">
    <location>
        <begin position="1"/>
        <end position="347"/>
    </location>
</feature>
<feature type="transmembrane region" description="Helical" evidence="3">
    <location>
        <begin position="3"/>
        <end position="23"/>
    </location>
</feature>
<feature type="transmembrane region" description="Helical" evidence="3">
    <location>
        <begin position="25"/>
        <end position="45"/>
    </location>
</feature>
<feature type="transmembrane region" description="Helical" evidence="3">
    <location>
        <begin position="59"/>
        <end position="79"/>
    </location>
</feature>
<feature type="transmembrane region" description="Helical" evidence="3">
    <location>
        <begin position="96"/>
        <end position="116"/>
    </location>
</feature>
<feature type="transmembrane region" description="Helical" evidence="3">
    <location>
        <begin position="127"/>
        <end position="147"/>
    </location>
</feature>
<feature type="transmembrane region" description="Helical" evidence="3">
    <location>
        <begin position="149"/>
        <end position="169"/>
    </location>
</feature>
<feature type="transmembrane region" description="Helical" evidence="3">
    <location>
        <begin position="178"/>
        <end position="198"/>
    </location>
</feature>
<feature type="transmembrane region" description="Helical" evidence="3">
    <location>
        <begin position="201"/>
        <end position="221"/>
    </location>
</feature>
<feature type="transmembrane region" description="Helical" evidence="3">
    <location>
        <begin position="239"/>
        <end position="259"/>
    </location>
</feature>
<feature type="transmembrane region" description="Helical" evidence="3">
    <location>
        <begin position="274"/>
        <end position="294"/>
    </location>
</feature>
<feature type="transmembrane region" description="Helical" evidence="3">
    <location>
        <begin position="326"/>
        <end position="346"/>
    </location>
</feature>
<evidence type="ECO:0000250" key="1">
    <source>
        <dbReference type="UniProtKB" id="P03891"/>
    </source>
</evidence>
<evidence type="ECO:0000250" key="2">
    <source>
        <dbReference type="UniProtKB" id="P03892"/>
    </source>
</evidence>
<evidence type="ECO:0000255" key="3"/>
<evidence type="ECO:0000305" key="4"/>
<keyword id="KW-0249">Electron transport</keyword>
<keyword id="KW-0472">Membrane</keyword>
<keyword id="KW-0496">Mitochondrion</keyword>
<keyword id="KW-0999">Mitochondrion inner membrane</keyword>
<keyword id="KW-0520">NAD</keyword>
<keyword id="KW-0679">Respiratory chain</keyword>
<keyword id="KW-1278">Translocase</keyword>
<keyword id="KW-0812">Transmembrane</keyword>
<keyword id="KW-1133">Transmembrane helix</keyword>
<keyword id="KW-0813">Transport</keyword>
<keyword id="KW-0830">Ubiquinone</keyword>
<protein>
    <recommendedName>
        <fullName evidence="1">NADH-ubiquinone oxidoreductase chain 2</fullName>
        <ecNumber evidence="1">7.1.1.2</ecNumber>
    </recommendedName>
    <alternativeName>
        <fullName>NADH dehydrogenase subunit 2</fullName>
    </alternativeName>
</protein>
<reference key="1">
    <citation type="submission" date="2004-07" db="EMBL/GenBank/DDBJ databases">
        <title>Phylogeny, phylogeography, and geographic variation of Sylvisorex howelli, an endemic shrew of the Eastern Arc mountains.</title>
        <authorList>
            <person name="Stanley W.T."/>
            <person name="Olson L.E."/>
        </authorList>
    </citation>
    <scope>NUCLEOTIDE SEQUENCE [GENOMIC DNA]</scope>
</reference>
<proteinExistence type="inferred from homology"/>
<geneLocation type="mitochondrion"/>
<dbReference type="EC" id="7.1.1.2" evidence="1"/>
<dbReference type="EMBL" id="AY691837">
    <property type="protein sequence ID" value="AAW29760.1"/>
    <property type="molecule type" value="Genomic_DNA"/>
</dbReference>
<dbReference type="SMR" id="Q2TQ15"/>
<dbReference type="GO" id="GO:0005743">
    <property type="term" value="C:mitochondrial inner membrane"/>
    <property type="evidence" value="ECO:0000250"/>
    <property type="project" value="UniProtKB"/>
</dbReference>
<dbReference type="GO" id="GO:0008137">
    <property type="term" value="F:NADH dehydrogenase (ubiquinone) activity"/>
    <property type="evidence" value="ECO:0000250"/>
    <property type="project" value="UniProtKB"/>
</dbReference>
<dbReference type="GO" id="GO:0006120">
    <property type="term" value="P:mitochondrial electron transport, NADH to ubiquinone"/>
    <property type="evidence" value="ECO:0000250"/>
    <property type="project" value="UniProtKB"/>
</dbReference>
<dbReference type="GO" id="GO:0032981">
    <property type="term" value="P:mitochondrial respiratory chain complex I assembly"/>
    <property type="evidence" value="ECO:0000250"/>
    <property type="project" value="UniProtKB"/>
</dbReference>
<dbReference type="InterPro" id="IPR050175">
    <property type="entry name" value="Complex_I_Subunit_2"/>
</dbReference>
<dbReference type="InterPro" id="IPR010933">
    <property type="entry name" value="NADH_DH_su2_C"/>
</dbReference>
<dbReference type="InterPro" id="IPR003917">
    <property type="entry name" value="NADH_UbQ_OxRdtase_chain2"/>
</dbReference>
<dbReference type="InterPro" id="IPR001750">
    <property type="entry name" value="ND/Mrp_TM"/>
</dbReference>
<dbReference type="PANTHER" id="PTHR46552">
    <property type="entry name" value="NADH-UBIQUINONE OXIDOREDUCTASE CHAIN 2"/>
    <property type="match status" value="1"/>
</dbReference>
<dbReference type="PANTHER" id="PTHR46552:SF1">
    <property type="entry name" value="NADH-UBIQUINONE OXIDOREDUCTASE CHAIN 2"/>
    <property type="match status" value="1"/>
</dbReference>
<dbReference type="Pfam" id="PF06444">
    <property type="entry name" value="NADH_dehy_S2_C"/>
    <property type="match status" value="1"/>
</dbReference>
<dbReference type="Pfam" id="PF00361">
    <property type="entry name" value="Proton_antipo_M"/>
    <property type="match status" value="1"/>
</dbReference>
<dbReference type="PRINTS" id="PR01436">
    <property type="entry name" value="NADHDHGNASE2"/>
</dbReference>
<gene>
    <name evidence="1" type="primary">MT-ND2</name>
    <name type="synonym">MTND2</name>
    <name type="synonym">NADH2</name>
    <name type="synonym">ND2</name>
</gene>
<comment type="function">
    <text evidence="1">Core subunit of the mitochondrial membrane respiratory chain NADH dehydrogenase (Complex I) which catalyzes electron transfer from NADH through the respiratory chain, using ubiquinone as an electron acceptor. Essential for the catalytic activity and assembly of complex I.</text>
</comment>
<comment type="catalytic activity">
    <reaction evidence="1">
        <text>a ubiquinone + NADH + 5 H(+)(in) = a ubiquinol + NAD(+) + 4 H(+)(out)</text>
        <dbReference type="Rhea" id="RHEA:29091"/>
        <dbReference type="Rhea" id="RHEA-COMP:9565"/>
        <dbReference type="Rhea" id="RHEA-COMP:9566"/>
        <dbReference type="ChEBI" id="CHEBI:15378"/>
        <dbReference type="ChEBI" id="CHEBI:16389"/>
        <dbReference type="ChEBI" id="CHEBI:17976"/>
        <dbReference type="ChEBI" id="CHEBI:57540"/>
        <dbReference type="ChEBI" id="CHEBI:57945"/>
        <dbReference type="EC" id="7.1.1.2"/>
    </reaction>
</comment>
<comment type="subunit">
    <text evidence="1 2">Core subunit of respiratory chain NADH dehydrogenase (Complex I) which is composed of 45 different subunits. Interacts with TMEM242 (By similarity).</text>
</comment>
<comment type="subcellular location">
    <subcellularLocation>
        <location evidence="2">Mitochondrion inner membrane</location>
        <topology evidence="3">Multi-pass membrane protein</topology>
    </subcellularLocation>
</comment>
<comment type="similarity">
    <text evidence="4">Belongs to the complex I subunit 2 family.</text>
</comment>
<accession>Q2TQ15</accession>
<name>NU2M_SYLOL</name>
<sequence>MNPMTFTVLLATIMSGTSIVLLSSHWFMTWLGFEMNMMAIIPVLMKKYNPRSMEAATKYFLTQATASMILVLAIIINTMYSGQWTIMNMENQLASILITLALVMKLGLAPFHFWVPEVTQGVSLDSGLILLTWQKIAPLSLLYQIYPSLNTNLLLTMSLLSIMIGGWGGLNQTQLRKIMAYSSIAHMGWMIAIMTYNPNLSLLNLIIYITMTSSMFMLLIINSTTSTLSLSLTWNKTPIVTTMMLISLLSLGGLPPLTGFMPKWMIIQELTKNNSLILPTLMSILALLNLFFYMRLAYSTTLTMFPTTNNTKLSWQFKNTNILPTTAPLISISTMILPLTPLLITLN</sequence>
<organism>
    <name type="scientific">Sylvisorex ollula</name>
    <name type="common">Greater forest shrew</name>
    <dbReference type="NCBI Taxonomy" id="128151"/>
    <lineage>
        <taxon>Eukaryota</taxon>
        <taxon>Metazoa</taxon>
        <taxon>Chordata</taxon>
        <taxon>Craniata</taxon>
        <taxon>Vertebrata</taxon>
        <taxon>Euteleostomi</taxon>
        <taxon>Mammalia</taxon>
        <taxon>Eutheria</taxon>
        <taxon>Laurasiatheria</taxon>
        <taxon>Eulipotyphla</taxon>
        <taxon>Soricidae</taxon>
        <taxon>Crocidurinae</taxon>
        <taxon>Sylvisorex</taxon>
    </lineage>
</organism>